<organism>
    <name type="scientific">Erythrobacter litoralis (strain HTCC2594)</name>
    <dbReference type="NCBI Taxonomy" id="314225"/>
    <lineage>
        <taxon>Bacteria</taxon>
        <taxon>Pseudomonadati</taxon>
        <taxon>Pseudomonadota</taxon>
        <taxon>Alphaproteobacteria</taxon>
        <taxon>Sphingomonadales</taxon>
        <taxon>Erythrobacteraceae</taxon>
        <taxon>Erythrobacter/Porphyrobacter group</taxon>
        <taxon>Erythrobacter</taxon>
    </lineage>
</organism>
<keyword id="KW-1185">Reference proteome</keyword>
<keyword id="KW-0687">Ribonucleoprotein</keyword>
<keyword id="KW-0689">Ribosomal protein</keyword>
<keyword id="KW-0694">RNA-binding</keyword>
<keyword id="KW-0699">rRNA-binding</keyword>
<comment type="function">
    <text evidence="1">Binds directly to 23S ribosomal RNA and is necessary for the in vitro assembly process of the 50S ribosomal subunit. It is not involved in the protein synthesizing functions of that subunit.</text>
</comment>
<comment type="similarity">
    <text evidence="1">Belongs to the bacterial ribosomal protein bL20 family.</text>
</comment>
<protein>
    <recommendedName>
        <fullName evidence="1">Large ribosomal subunit protein bL20</fullName>
    </recommendedName>
    <alternativeName>
        <fullName evidence="2">50S ribosomal protein L20</fullName>
    </alternativeName>
</protein>
<evidence type="ECO:0000255" key="1">
    <source>
        <dbReference type="HAMAP-Rule" id="MF_00382"/>
    </source>
</evidence>
<evidence type="ECO:0000305" key="2"/>
<dbReference type="EMBL" id="CP000157">
    <property type="protein sequence ID" value="ABC64856.1"/>
    <property type="molecule type" value="Genomic_DNA"/>
</dbReference>
<dbReference type="RefSeq" id="WP_011415678.1">
    <property type="nucleotide sequence ID" value="NC_007722.1"/>
</dbReference>
<dbReference type="SMR" id="Q2N635"/>
<dbReference type="STRING" id="314225.ELI_13820"/>
<dbReference type="KEGG" id="eli:ELI_13820"/>
<dbReference type="eggNOG" id="COG0292">
    <property type="taxonomic scope" value="Bacteria"/>
</dbReference>
<dbReference type="HOGENOM" id="CLU_123265_0_1_5"/>
<dbReference type="OrthoDB" id="9808966at2"/>
<dbReference type="Proteomes" id="UP000008808">
    <property type="component" value="Chromosome"/>
</dbReference>
<dbReference type="GO" id="GO:1990904">
    <property type="term" value="C:ribonucleoprotein complex"/>
    <property type="evidence" value="ECO:0007669"/>
    <property type="project" value="UniProtKB-KW"/>
</dbReference>
<dbReference type="GO" id="GO:0005840">
    <property type="term" value="C:ribosome"/>
    <property type="evidence" value="ECO:0007669"/>
    <property type="project" value="UniProtKB-KW"/>
</dbReference>
<dbReference type="GO" id="GO:0019843">
    <property type="term" value="F:rRNA binding"/>
    <property type="evidence" value="ECO:0007669"/>
    <property type="project" value="UniProtKB-UniRule"/>
</dbReference>
<dbReference type="GO" id="GO:0003735">
    <property type="term" value="F:structural constituent of ribosome"/>
    <property type="evidence" value="ECO:0007669"/>
    <property type="project" value="InterPro"/>
</dbReference>
<dbReference type="GO" id="GO:0000027">
    <property type="term" value="P:ribosomal large subunit assembly"/>
    <property type="evidence" value="ECO:0007669"/>
    <property type="project" value="UniProtKB-UniRule"/>
</dbReference>
<dbReference type="GO" id="GO:0006412">
    <property type="term" value="P:translation"/>
    <property type="evidence" value="ECO:0007669"/>
    <property type="project" value="InterPro"/>
</dbReference>
<dbReference type="CDD" id="cd07026">
    <property type="entry name" value="Ribosomal_L20"/>
    <property type="match status" value="1"/>
</dbReference>
<dbReference type="FunFam" id="1.10.1900.20:FF:000001">
    <property type="entry name" value="50S ribosomal protein L20"/>
    <property type="match status" value="1"/>
</dbReference>
<dbReference type="Gene3D" id="6.10.160.10">
    <property type="match status" value="1"/>
</dbReference>
<dbReference type="Gene3D" id="1.10.1900.20">
    <property type="entry name" value="Ribosomal protein L20"/>
    <property type="match status" value="1"/>
</dbReference>
<dbReference type="HAMAP" id="MF_00382">
    <property type="entry name" value="Ribosomal_bL20"/>
    <property type="match status" value="1"/>
</dbReference>
<dbReference type="InterPro" id="IPR005813">
    <property type="entry name" value="Ribosomal_bL20"/>
</dbReference>
<dbReference type="InterPro" id="IPR049946">
    <property type="entry name" value="RIBOSOMAL_L20_CS"/>
</dbReference>
<dbReference type="InterPro" id="IPR035566">
    <property type="entry name" value="Ribosomal_protein_bL20_C"/>
</dbReference>
<dbReference type="NCBIfam" id="TIGR01032">
    <property type="entry name" value="rplT_bact"/>
    <property type="match status" value="1"/>
</dbReference>
<dbReference type="PANTHER" id="PTHR10986">
    <property type="entry name" value="39S RIBOSOMAL PROTEIN L20"/>
    <property type="match status" value="1"/>
</dbReference>
<dbReference type="Pfam" id="PF00453">
    <property type="entry name" value="Ribosomal_L20"/>
    <property type="match status" value="1"/>
</dbReference>
<dbReference type="PRINTS" id="PR00062">
    <property type="entry name" value="RIBOSOMALL20"/>
</dbReference>
<dbReference type="SUPFAM" id="SSF74731">
    <property type="entry name" value="Ribosomal protein L20"/>
    <property type="match status" value="1"/>
</dbReference>
<dbReference type="PROSITE" id="PS00937">
    <property type="entry name" value="RIBOSOMAL_L20"/>
    <property type="match status" value="1"/>
</dbReference>
<proteinExistence type="inferred from homology"/>
<name>RL20_ERYLH</name>
<gene>
    <name evidence="1" type="primary">rplT</name>
    <name type="ordered locus">ELI_13820</name>
</gene>
<reference key="1">
    <citation type="journal article" date="2009" name="J. Bacteriol.">
        <title>Complete genome sequence of Erythrobacter litoralis HTCC2594.</title>
        <authorList>
            <person name="Oh H.M."/>
            <person name="Giovannoni S.J."/>
            <person name="Ferriera S."/>
            <person name="Johnson J."/>
            <person name="Cho J.C."/>
        </authorList>
    </citation>
    <scope>NUCLEOTIDE SEQUENCE [LARGE SCALE GENOMIC DNA]</scope>
    <source>
        <strain>HTCC2594</strain>
    </source>
</reference>
<feature type="chain" id="PRO_1000048975" description="Large ribosomal subunit protein bL20">
    <location>
        <begin position="1"/>
        <end position="119"/>
    </location>
</feature>
<accession>Q2N635</accession>
<sequence length="119" mass="13653">MPRIKRGVTTRQKHKRLLDQAKGYRGRRKNTIRIARQAVEKAGQYAYRDRKVKKRSFRALWIQRINAAVRAEGLTYSQFMHGVKLAGIELDRKVMADLAMNEEAAFKSVIDQAKAALPA</sequence>